<proteinExistence type="inferred from homology"/>
<organism>
    <name type="scientific">Dictyostelium discoideum</name>
    <name type="common">Social amoeba</name>
    <dbReference type="NCBI Taxonomy" id="44689"/>
    <lineage>
        <taxon>Eukaryota</taxon>
        <taxon>Amoebozoa</taxon>
        <taxon>Evosea</taxon>
        <taxon>Eumycetozoa</taxon>
        <taxon>Dictyostelia</taxon>
        <taxon>Dictyosteliales</taxon>
        <taxon>Dictyosteliaceae</taxon>
        <taxon>Dictyostelium</taxon>
    </lineage>
</organism>
<sequence length="2604" mass="291203">MTFNNIKDENNDDIAIIGMGFRFPGGGNNPYQFWNQLSNKMDGISKIPTEKWSRSFYEQKYINNEYGGVLKDEEWKNFDPLFFGISPKEAPIIDPQQRLLMTTLWEAFEDANIKPSTFRGSDTAVFIGMMNTDYQRCQFRDISYVNPYITPGTAGSFISNRLSFSFDLRGPSMTLDTACSSSLNAVYLGCQAIANGDSKMAIVGGVNGIFDPCFSMTFSGLNMLGHKGQCRSFDAGADGYIRSEGGGVCILKKYSDAIKDGDRIYCVIKGGSSNVDGYNAKTNIIQPSMKAQGENIEIALKKSGVNPSDIYYIEAHGTGTPVGDPIEIEAISRIFKDNHTPDAPLYIGSVKSNIGHLESAAGIASLIKVALSLKNRSLVPNIHFEKPNPLIKFEDWNIRVVTDEIQFPINKLINMGINCFGLSGSNCHMILSEAPINYDELLKTTNNNSTSSSSNDDKKEYLIPFSANCNISLDKYIEKLISNQSIYKDTILFKDFVKHQTISKSNLIKRKVITASDWDDFLNKRNETTSTSSLTSTISAPASSTPVIYVFTGQGPQWRDMGKALYETESVFKDAIDHCDKLLANYFGYSILQKLLSLESEDSPEIHHPILAQPSIFLIQVGLVALYKSFGISPSIVVGHSFGEIPSALFSDVISLETAVKIVYYRGLAQNLTMGTGRLLSIGIGADAYLEKCALLYPEIEIACYNDPNSIVITGSEQDLLGAKSTLSAEGVFCAFLGTPCSFHSSKQEMIKEKIFKDLSDLPESNVPCVPFFSTITGSQLSHKGFYNVQYIYDNLRMPVEFTKAISNIFNFIEENESYKNAIFLEIGPHPTLGFYIPKCKPSNSTITSKPIIVSPLHKKKEELTQFKLAISTLYCNGVEIDFASGQQLLPTSSSSGGGDISSFKESTNKLPRYQWDFEEYWDEPNQSKMVKRGPSNNLLGHDQFAGNTLMELFIDIDKSAHQYLKGHKIKGKYLFPGSGYIDNILRQFNGQDITIFNLEFSNPFFLKDGVQHHLQTSITPTTKGEFKVEFFIKDNRNSTKWTKTSNGRIGLFKHNPKNNKLDIEKLKSQCSFTTLTKSEVYNKLLLLSLPYGPTFQRVESCSIGDGCSFFKLSMSPCSEFDKDFLNPSIIDCAFHGLLVLSEGPQEIVFDRLQDMKFYSSNVPSTRPQFIYAFAKFDKIEGNSTHGSLNIILEDGTLLISIKNVKCTSLIRLKKQSIKYPSQNVYSHHWQSKDSPLTLIENQLIEEKSSESKINFEKLLNDKLFNYYLIRLLNQSIKSEFIEFDYKTSTVDTLDIGSKNAKLLEKIQSILNPIDSLDQSIDITSLKQAIIVKSSFKNEIKLVEKSIKRIVSLLKGGESEHFSPSNPSSPNDTPRNNSNNCSSKNNAASSDDADDDTNNEETINQLNNEPFNFSNSQFISNQNQLISKTIVNSFDRLINSIEIGEKKLIKIIDLSSIYQNYQLSKLLLLQLNQLLINLSNNNNIEIEYTIPSNTKNIDSITEETKSISNVLNIKYRSFDLQDDLESNGYLNSNYDLIITSLLLVSTNSIDSNEVLSKLYKLLLPKGQLILMEPPKGVLSFNLLFANDFKQSLEIKSEQEIKSLIIYCGFTKIETNLNTKDDEEQQQPPPPSILIVQAEKRDIESMSLTFSSDPKSLNSSYSNCIFIVSKEQKENPTSYIQEYFDITEFFCQNATIIEADDSELLTKTIESGVGKNDIIFFLVSLEELTIENYKQVTMQYTLVNQILLRNNLSTRFALLTYDSQNGGKNYLGSSLIGTFRYFLEFRSLNIFSIDVDKDSIDNLTLFLRLVDLSTIGDRETIVRNNKIFVQKIFKEPKLLSPSNNYEKNTNNLFLYSNSNLDFSFQSKEKLLHGCVEIKVMSTGINYKDSLFYRGLLPQEVFSKGDIYSPPFGLECAGYITRVAPSGVTRFKVGDQVVGFASHSLSSHVTTHQNKIVLKPENISFNEAAAVCVVYATSYYSIFHIGAFIADKESILVHSATGGVGLASLNLLKWKRNQLKKHGNSEISNDASIYATVGSKEKIDYLQEKYGDLITAIYNSRDTEYCDEIKQQSAQGGVDLILNTLSGDYLSSNFRSLSQVGRIMDLSVTQLVENDSLDFSNFKYHVGYNTIDLDRATKYNSKIIRDILTEVFDAISDGSLENIPVKVFPAIQVKTAIEYINERVHIGKIVVDFENFEQDILKPALQEKENPIQLNKVKKLEHTCDTLNNTILITGQTGIAVHILKWIISGSVLNSNKSQQQVTDFIILSRSSLKWELENLINQTKHKYGDRFRFHYKSVNIADLNSTRTAIDQVYSSCKNVSPIKSVLHFATVYEYILPENITQTVIDNTHNPKAVGAINLHNLSIEKDWKLENFILFSSIGAIIGGSKQCAYSSANLVLDSLSNYRKSIGLASTSINWGGLDAGGVAATDKSVASFLEGQGILLVSLSKILGCLDSVFQPSNSHLSNFMLSSFNIDNLLSSAPQMKRKMDHHLTNYKTSSASSDDSLGDSGSTQAKVISTISELLSIHPSKLNLDTRLKDYGIDSLLTVQLKNWIDKEFTKNLFTHLQLSSSSINSIIQRISSKSTSTSTPNPTNTSKQTATKKT</sequence>
<accession>Q869X2</accession>
<accession>Q554C1</accession>
<name>PKS17_DICDI</name>
<reference key="1">
    <citation type="journal article" date="2002" name="Nature">
        <title>Sequence and analysis of chromosome 2 of Dictyostelium discoideum.</title>
        <authorList>
            <person name="Gloeckner G."/>
            <person name="Eichinger L."/>
            <person name="Szafranski K."/>
            <person name="Pachebat J.A."/>
            <person name="Bankier A.T."/>
            <person name="Dear P.H."/>
            <person name="Lehmann R."/>
            <person name="Baumgart C."/>
            <person name="Parra G."/>
            <person name="Abril J.F."/>
            <person name="Guigo R."/>
            <person name="Kumpf K."/>
            <person name="Tunggal B."/>
            <person name="Cox E.C."/>
            <person name="Quail M.A."/>
            <person name="Platzer M."/>
            <person name="Rosenthal A."/>
            <person name="Noegel A.A."/>
        </authorList>
    </citation>
    <scope>NUCLEOTIDE SEQUENCE [LARGE SCALE GENOMIC DNA]</scope>
    <source>
        <strain>AX4</strain>
    </source>
</reference>
<reference key="2">
    <citation type="journal article" date="2005" name="Nature">
        <title>The genome of the social amoeba Dictyostelium discoideum.</title>
        <authorList>
            <person name="Eichinger L."/>
            <person name="Pachebat J.A."/>
            <person name="Gloeckner G."/>
            <person name="Rajandream M.A."/>
            <person name="Sucgang R."/>
            <person name="Berriman M."/>
            <person name="Song J."/>
            <person name="Olsen R."/>
            <person name="Szafranski K."/>
            <person name="Xu Q."/>
            <person name="Tunggal B."/>
            <person name="Kummerfeld S."/>
            <person name="Madera M."/>
            <person name="Konfortov B.A."/>
            <person name="Rivero F."/>
            <person name="Bankier A.T."/>
            <person name="Lehmann R."/>
            <person name="Hamlin N."/>
            <person name="Davies R."/>
            <person name="Gaudet P."/>
            <person name="Fey P."/>
            <person name="Pilcher K."/>
            <person name="Chen G."/>
            <person name="Saunders D."/>
            <person name="Sodergren E.J."/>
            <person name="Davis P."/>
            <person name="Kerhornou A."/>
            <person name="Nie X."/>
            <person name="Hall N."/>
            <person name="Anjard C."/>
            <person name="Hemphill L."/>
            <person name="Bason N."/>
            <person name="Farbrother P."/>
            <person name="Desany B."/>
            <person name="Just E."/>
            <person name="Morio T."/>
            <person name="Rost R."/>
            <person name="Churcher C.M."/>
            <person name="Cooper J."/>
            <person name="Haydock S."/>
            <person name="van Driessche N."/>
            <person name="Cronin A."/>
            <person name="Goodhead I."/>
            <person name="Muzny D.M."/>
            <person name="Mourier T."/>
            <person name="Pain A."/>
            <person name="Lu M."/>
            <person name="Harper D."/>
            <person name="Lindsay R."/>
            <person name="Hauser H."/>
            <person name="James K.D."/>
            <person name="Quiles M."/>
            <person name="Madan Babu M."/>
            <person name="Saito T."/>
            <person name="Buchrieser C."/>
            <person name="Wardroper A."/>
            <person name="Felder M."/>
            <person name="Thangavelu M."/>
            <person name="Johnson D."/>
            <person name="Knights A."/>
            <person name="Loulseged H."/>
            <person name="Mungall K.L."/>
            <person name="Oliver K."/>
            <person name="Price C."/>
            <person name="Quail M.A."/>
            <person name="Urushihara H."/>
            <person name="Hernandez J."/>
            <person name="Rabbinowitsch E."/>
            <person name="Steffen D."/>
            <person name="Sanders M."/>
            <person name="Ma J."/>
            <person name="Kohara Y."/>
            <person name="Sharp S."/>
            <person name="Simmonds M.N."/>
            <person name="Spiegler S."/>
            <person name="Tivey A."/>
            <person name="Sugano S."/>
            <person name="White B."/>
            <person name="Walker D."/>
            <person name="Woodward J.R."/>
            <person name="Winckler T."/>
            <person name="Tanaka Y."/>
            <person name="Shaulsky G."/>
            <person name="Schleicher M."/>
            <person name="Weinstock G.M."/>
            <person name="Rosenthal A."/>
            <person name="Cox E.C."/>
            <person name="Chisholm R.L."/>
            <person name="Gibbs R.A."/>
            <person name="Loomis W.F."/>
            <person name="Platzer M."/>
            <person name="Kay R.R."/>
            <person name="Williams J.G."/>
            <person name="Dear P.H."/>
            <person name="Noegel A.A."/>
            <person name="Barrell B.G."/>
            <person name="Kuspa A."/>
        </authorList>
    </citation>
    <scope>NUCLEOTIDE SEQUENCE [LARGE SCALE GENOMIC DNA]</scope>
    <source>
        <strain>AX4</strain>
    </source>
</reference>
<reference key="3">
    <citation type="journal article" date="2007" name="Bioinformatics">
        <title>Polyketide synthase genes and the natural products potential of Dictyostelium discoideum.</title>
        <authorList>
            <person name="Zucko J."/>
            <person name="Skunca N."/>
            <person name="Curk T."/>
            <person name="Zupan B."/>
            <person name="Long P.F."/>
            <person name="Cullum J."/>
            <person name="Kessin R.H."/>
            <person name="Hranueli D."/>
        </authorList>
    </citation>
    <scope>IDENTIFICATION</scope>
</reference>
<comment type="function">
    <text evidence="1">Probable polyketide synthase.</text>
</comment>
<comment type="cofactor">
    <cofactor evidence="1">
        <name>pantetheine 4'-phosphate</name>
        <dbReference type="ChEBI" id="CHEBI:47942"/>
    </cofactor>
    <text evidence="1">Binds 1 phosphopantetheine covalently.</text>
</comment>
<comment type="domain">
    <text evidence="1">Modular protein that is responsible for the completion of one condensation-processing cycle. The beta-ketoacyl synthase region is responsible for the actual condensation reaction while the acyl/malonyl transferase region is responsible for incorporating carboxylic acids units onto an acyl carrier protein (ACP) domain (By similarity).</text>
</comment>
<comment type="miscellaneous">
    <text>Encoded by one of the numerous copies of polyketide synthase genes and clustered as a pair pks16/pks17 in chromosome 2.</text>
</comment>
<feature type="chain" id="PRO_0000371382" description="Probable polyketide synthase 17">
    <location>
        <begin position="1"/>
        <end position="2604"/>
    </location>
</feature>
<feature type="domain" description="Ketosynthase family 3 (KS3)" evidence="3">
    <location>
        <begin position="11"/>
        <end position="433"/>
    </location>
</feature>
<feature type="domain" description="PKS/mFAS DH" evidence="4">
    <location>
        <begin position="937"/>
        <end position="1216"/>
    </location>
</feature>
<feature type="domain" description="Carrier" evidence="2">
    <location>
        <begin position="2507"/>
        <end position="2584"/>
    </location>
</feature>
<feature type="region of interest" description="Acyl/malonyl transferases">
    <location>
        <begin position="631"/>
        <end position="664"/>
    </location>
</feature>
<feature type="region of interest" description="N-terminal hotdog fold" evidence="4">
    <location>
        <begin position="937"/>
        <end position="1057"/>
    </location>
</feature>
<feature type="region of interest" description="C-terminal hotdog fold" evidence="4">
    <location>
        <begin position="1072"/>
        <end position="1216"/>
    </location>
</feature>
<feature type="region of interest" description="Disordered" evidence="6">
    <location>
        <begin position="1357"/>
        <end position="1407"/>
    </location>
</feature>
<feature type="region of interest" description="Disordered" evidence="6">
    <location>
        <begin position="2581"/>
        <end position="2604"/>
    </location>
</feature>
<feature type="compositionally biased region" description="Low complexity" evidence="6">
    <location>
        <begin position="1363"/>
        <end position="1390"/>
    </location>
</feature>
<feature type="compositionally biased region" description="Low complexity" evidence="6">
    <location>
        <begin position="2581"/>
        <end position="2597"/>
    </location>
</feature>
<feature type="active site" description="For beta-ketoacyl synthase activity" evidence="3">
    <location>
        <position position="179"/>
    </location>
</feature>
<feature type="active site" description="For beta-ketoacyl synthase activity" evidence="3">
    <location>
        <position position="316"/>
    </location>
</feature>
<feature type="active site" description="For beta-ketoacyl synthase activity" evidence="3">
    <location>
        <position position="356"/>
    </location>
</feature>
<feature type="active site" description="For acyl/malonyl transferase activity" evidence="5">
    <location>
        <position position="641"/>
    </location>
</feature>
<feature type="active site" description="Proton acceptor; for dehydratase activity" evidence="4">
    <location>
        <position position="968"/>
    </location>
</feature>
<feature type="active site" description="Proton donor; for dehydratase activity" evidence="4">
    <location>
        <position position="1132"/>
    </location>
</feature>
<feature type="modified residue" description="O-(pantetheine 4'-phosphoryl)serine" evidence="2">
    <location>
        <position position="2544"/>
    </location>
</feature>
<keyword id="KW-0596">Phosphopantetheine</keyword>
<keyword id="KW-0597">Phosphoprotein</keyword>
<keyword id="KW-1185">Reference proteome</keyword>
<keyword id="KW-0808">Transferase</keyword>
<gene>
    <name type="primary">pks17</name>
    <name type="ORF">DDB_G0275077</name>
</gene>
<dbReference type="EC" id="2.3.1.-"/>
<dbReference type="EMBL" id="AAFI02000013">
    <property type="protein sequence ID" value="EAL69819.1"/>
    <property type="molecule type" value="Genomic_DNA"/>
</dbReference>
<dbReference type="RefSeq" id="XP_643790.1">
    <property type="nucleotide sequence ID" value="XM_638698.1"/>
</dbReference>
<dbReference type="SMR" id="Q869X2"/>
<dbReference type="STRING" id="44689.Q869X2"/>
<dbReference type="GlyGen" id="Q869X2">
    <property type="glycosylation" value="1 site"/>
</dbReference>
<dbReference type="PaxDb" id="44689-DDB0230071"/>
<dbReference type="EnsemblProtists" id="EAL69819">
    <property type="protein sequence ID" value="EAL69819"/>
    <property type="gene ID" value="DDB_G0275077"/>
</dbReference>
<dbReference type="GeneID" id="8619835"/>
<dbReference type="KEGG" id="ddi:DDB_G0275077"/>
<dbReference type="dictyBase" id="DDB_G0275077">
    <property type="gene designation" value="pks17"/>
</dbReference>
<dbReference type="VEuPathDB" id="AmoebaDB:DDB_G0275077"/>
<dbReference type="eggNOG" id="KOG1202">
    <property type="taxonomic scope" value="Eukaryota"/>
</dbReference>
<dbReference type="HOGENOM" id="CLU_000022_31_0_1"/>
<dbReference type="InParanoid" id="Q869X2"/>
<dbReference type="PhylomeDB" id="Q869X2"/>
<dbReference type="Reactome" id="R-DDI-199220">
    <property type="pathway name" value="Vitamin B5 (pantothenate) metabolism"/>
</dbReference>
<dbReference type="Reactome" id="R-DDI-75105">
    <property type="pathway name" value="Fatty acyl-CoA biosynthesis"/>
</dbReference>
<dbReference type="PRO" id="PR:Q869X2"/>
<dbReference type="Proteomes" id="UP000002195">
    <property type="component" value="Chromosome 2"/>
</dbReference>
<dbReference type="GO" id="GO:0004315">
    <property type="term" value="F:3-oxoacyl-[acyl-carrier-protein] synthase activity"/>
    <property type="evidence" value="ECO:0007669"/>
    <property type="project" value="InterPro"/>
</dbReference>
<dbReference type="GO" id="GO:0004312">
    <property type="term" value="F:fatty acid synthase activity"/>
    <property type="evidence" value="ECO:0000315"/>
    <property type="project" value="dictyBase"/>
</dbReference>
<dbReference type="GO" id="GO:0016491">
    <property type="term" value="F:oxidoreductase activity"/>
    <property type="evidence" value="ECO:0007669"/>
    <property type="project" value="InterPro"/>
</dbReference>
<dbReference type="GO" id="GO:0006633">
    <property type="term" value="P:fatty acid biosynthetic process"/>
    <property type="evidence" value="ECO:0000315"/>
    <property type="project" value="dictyBase"/>
</dbReference>
<dbReference type="GO" id="GO:0030587">
    <property type="term" value="P:sorocarp development"/>
    <property type="evidence" value="ECO:0000315"/>
    <property type="project" value="dictyBase"/>
</dbReference>
<dbReference type="CDD" id="cd05195">
    <property type="entry name" value="enoyl_red"/>
    <property type="match status" value="1"/>
</dbReference>
<dbReference type="CDD" id="cd08954">
    <property type="entry name" value="KR_1_FAS_SDR_x"/>
    <property type="match status" value="1"/>
</dbReference>
<dbReference type="CDD" id="cd00833">
    <property type="entry name" value="PKS"/>
    <property type="match status" value="1"/>
</dbReference>
<dbReference type="FunFam" id="1.10.1200.10:FF:000013">
    <property type="entry name" value="Fatty acid synthase"/>
    <property type="match status" value="1"/>
</dbReference>
<dbReference type="FunFam" id="3.10.129.110:FF:000009">
    <property type="entry name" value="Probable polyketide synthase 2"/>
    <property type="match status" value="1"/>
</dbReference>
<dbReference type="FunFam" id="3.40.366.10:FF:000002">
    <property type="entry name" value="Probable polyketide synthase 2"/>
    <property type="match status" value="1"/>
</dbReference>
<dbReference type="FunFam" id="3.40.47.10:FF:000091">
    <property type="entry name" value="Probable polyketide synthase 32"/>
    <property type="match status" value="1"/>
</dbReference>
<dbReference type="Gene3D" id="3.30.70.3290">
    <property type="match status" value="1"/>
</dbReference>
<dbReference type="Gene3D" id="3.40.47.10">
    <property type="match status" value="1"/>
</dbReference>
<dbReference type="Gene3D" id="1.10.1200.10">
    <property type="entry name" value="ACP-like"/>
    <property type="match status" value="1"/>
</dbReference>
<dbReference type="Gene3D" id="3.40.366.10">
    <property type="entry name" value="Malonyl-Coenzyme A Acyl Carrier Protein, domain 2"/>
    <property type="match status" value="1"/>
</dbReference>
<dbReference type="Gene3D" id="3.90.180.10">
    <property type="entry name" value="Medium-chain alcohol dehydrogenases, catalytic domain"/>
    <property type="match status" value="1"/>
</dbReference>
<dbReference type="Gene3D" id="3.40.50.720">
    <property type="entry name" value="NAD(P)-binding Rossmann-like Domain"/>
    <property type="match status" value="2"/>
</dbReference>
<dbReference type="Gene3D" id="3.10.129.110">
    <property type="entry name" value="Polyketide synthase dehydratase"/>
    <property type="match status" value="1"/>
</dbReference>
<dbReference type="Gene3D" id="3.40.50.150">
    <property type="entry name" value="Vaccinia Virus protein VP39"/>
    <property type="match status" value="1"/>
</dbReference>
<dbReference type="InterPro" id="IPR001227">
    <property type="entry name" value="Ac_transferase_dom_sf"/>
</dbReference>
<dbReference type="InterPro" id="IPR036736">
    <property type="entry name" value="ACP-like_sf"/>
</dbReference>
<dbReference type="InterPro" id="IPR014043">
    <property type="entry name" value="Acyl_transferase_dom"/>
</dbReference>
<dbReference type="InterPro" id="IPR016035">
    <property type="entry name" value="Acyl_Trfase/lysoPLipase"/>
</dbReference>
<dbReference type="InterPro" id="IPR013154">
    <property type="entry name" value="ADH-like_N"/>
</dbReference>
<dbReference type="InterPro" id="IPR049011">
    <property type="entry name" value="Anamorsin_N_metazoan"/>
</dbReference>
<dbReference type="InterPro" id="IPR011032">
    <property type="entry name" value="GroES-like_sf"/>
</dbReference>
<dbReference type="InterPro" id="IPR018201">
    <property type="entry name" value="Ketoacyl_synth_AS"/>
</dbReference>
<dbReference type="InterPro" id="IPR014031">
    <property type="entry name" value="Ketoacyl_synth_C"/>
</dbReference>
<dbReference type="InterPro" id="IPR014030">
    <property type="entry name" value="Ketoacyl_synth_N"/>
</dbReference>
<dbReference type="InterPro" id="IPR016036">
    <property type="entry name" value="Malonyl_transacylase_ACP-bd"/>
</dbReference>
<dbReference type="InterPro" id="IPR036291">
    <property type="entry name" value="NAD(P)-bd_dom_sf"/>
</dbReference>
<dbReference type="InterPro" id="IPR032821">
    <property type="entry name" value="PKS_assoc"/>
</dbReference>
<dbReference type="InterPro" id="IPR020841">
    <property type="entry name" value="PKS_Beta-ketoAc_synthase_dom"/>
</dbReference>
<dbReference type="InterPro" id="IPR042104">
    <property type="entry name" value="PKS_dehydratase_sf"/>
</dbReference>
<dbReference type="InterPro" id="IPR049551">
    <property type="entry name" value="PKS_DH_C"/>
</dbReference>
<dbReference type="InterPro" id="IPR049552">
    <property type="entry name" value="PKS_DH_N"/>
</dbReference>
<dbReference type="InterPro" id="IPR020843">
    <property type="entry name" value="PKS_ER"/>
</dbReference>
<dbReference type="InterPro" id="IPR013968">
    <property type="entry name" value="PKS_KR"/>
</dbReference>
<dbReference type="InterPro" id="IPR049900">
    <property type="entry name" value="PKS_mFAS_DH"/>
</dbReference>
<dbReference type="InterPro" id="IPR050444">
    <property type="entry name" value="Polyketide_Synthase"/>
</dbReference>
<dbReference type="InterPro" id="IPR009081">
    <property type="entry name" value="PP-bd_ACP"/>
</dbReference>
<dbReference type="InterPro" id="IPR029063">
    <property type="entry name" value="SAM-dependent_MTases_sf"/>
</dbReference>
<dbReference type="InterPro" id="IPR016039">
    <property type="entry name" value="Thiolase-like"/>
</dbReference>
<dbReference type="PANTHER" id="PTHR45681:SF6">
    <property type="entry name" value="POLYKETIDE SYNTHASE 37"/>
    <property type="match status" value="1"/>
</dbReference>
<dbReference type="PANTHER" id="PTHR45681">
    <property type="entry name" value="POLYKETIDE SYNTHASE 44-RELATED"/>
    <property type="match status" value="1"/>
</dbReference>
<dbReference type="Pfam" id="PF23297">
    <property type="entry name" value="ACP_SdgA_C"/>
    <property type="match status" value="1"/>
</dbReference>
<dbReference type="Pfam" id="PF00698">
    <property type="entry name" value="Acyl_transf_1"/>
    <property type="match status" value="1"/>
</dbReference>
<dbReference type="Pfam" id="PF08240">
    <property type="entry name" value="ADH_N"/>
    <property type="match status" value="1"/>
</dbReference>
<dbReference type="Pfam" id="PF13602">
    <property type="entry name" value="ADH_zinc_N_2"/>
    <property type="match status" value="1"/>
</dbReference>
<dbReference type="Pfam" id="PF20922">
    <property type="entry name" value="Anamorsin_N"/>
    <property type="match status" value="1"/>
</dbReference>
<dbReference type="Pfam" id="PF16197">
    <property type="entry name" value="KAsynt_C_assoc"/>
    <property type="match status" value="1"/>
</dbReference>
<dbReference type="Pfam" id="PF00109">
    <property type="entry name" value="ketoacyl-synt"/>
    <property type="match status" value="1"/>
</dbReference>
<dbReference type="Pfam" id="PF02801">
    <property type="entry name" value="Ketoacyl-synt_C"/>
    <property type="match status" value="1"/>
</dbReference>
<dbReference type="Pfam" id="PF08659">
    <property type="entry name" value="KR"/>
    <property type="match status" value="1"/>
</dbReference>
<dbReference type="Pfam" id="PF21089">
    <property type="entry name" value="PKS_DH_N"/>
    <property type="match status" value="1"/>
</dbReference>
<dbReference type="Pfam" id="PF14765">
    <property type="entry name" value="PS-DH"/>
    <property type="match status" value="1"/>
</dbReference>
<dbReference type="SMART" id="SM00827">
    <property type="entry name" value="PKS_AT"/>
    <property type="match status" value="1"/>
</dbReference>
<dbReference type="SMART" id="SM00829">
    <property type="entry name" value="PKS_ER"/>
    <property type="match status" value="1"/>
</dbReference>
<dbReference type="SMART" id="SM00822">
    <property type="entry name" value="PKS_KR"/>
    <property type="match status" value="1"/>
</dbReference>
<dbReference type="SMART" id="SM00825">
    <property type="entry name" value="PKS_KS"/>
    <property type="match status" value="1"/>
</dbReference>
<dbReference type="SUPFAM" id="SSF47336">
    <property type="entry name" value="ACP-like"/>
    <property type="match status" value="1"/>
</dbReference>
<dbReference type="SUPFAM" id="SSF52151">
    <property type="entry name" value="FabD/lysophospholipase-like"/>
    <property type="match status" value="1"/>
</dbReference>
<dbReference type="SUPFAM" id="SSF50129">
    <property type="entry name" value="GroES-like"/>
    <property type="match status" value="1"/>
</dbReference>
<dbReference type="SUPFAM" id="SSF51735">
    <property type="entry name" value="NAD(P)-binding Rossmann-fold domains"/>
    <property type="match status" value="2"/>
</dbReference>
<dbReference type="SUPFAM" id="SSF55048">
    <property type="entry name" value="Probable ACP-binding domain of malonyl-CoA ACP transacylase"/>
    <property type="match status" value="1"/>
</dbReference>
<dbReference type="SUPFAM" id="SSF53335">
    <property type="entry name" value="S-adenosyl-L-methionine-dependent methyltransferases"/>
    <property type="match status" value="1"/>
</dbReference>
<dbReference type="SUPFAM" id="SSF53901">
    <property type="entry name" value="Thiolase-like"/>
    <property type="match status" value="1"/>
</dbReference>
<dbReference type="PROSITE" id="PS50075">
    <property type="entry name" value="CARRIER"/>
    <property type="match status" value="1"/>
</dbReference>
<dbReference type="PROSITE" id="PS00606">
    <property type="entry name" value="KS3_1"/>
    <property type="match status" value="1"/>
</dbReference>
<dbReference type="PROSITE" id="PS52004">
    <property type="entry name" value="KS3_2"/>
    <property type="match status" value="1"/>
</dbReference>
<dbReference type="PROSITE" id="PS52019">
    <property type="entry name" value="PKS_MFAS_DH"/>
    <property type="match status" value="1"/>
</dbReference>
<evidence type="ECO:0000250" key="1"/>
<evidence type="ECO:0000255" key="2">
    <source>
        <dbReference type="PROSITE-ProRule" id="PRU00258"/>
    </source>
</evidence>
<evidence type="ECO:0000255" key="3">
    <source>
        <dbReference type="PROSITE-ProRule" id="PRU01348"/>
    </source>
</evidence>
<evidence type="ECO:0000255" key="4">
    <source>
        <dbReference type="PROSITE-ProRule" id="PRU01363"/>
    </source>
</evidence>
<evidence type="ECO:0000255" key="5">
    <source>
        <dbReference type="PROSITE-ProRule" id="PRU10022"/>
    </source>
</evidence>
<evidence type="ECO:0000256" key="6">
    <source>
        <dbReference type="SAM" id="MobiDB-lite"/>
    </source>
</evidence>
<protein>
    <recommendedName>
        <fullName>Probable polyketide synthase 17</fullName>
        <shortName>dipks17</shortName>
        <ecNumber>2.3.1.-</ecNumber>
    </recommendedName>
</protein>